<reference key="1">
    <citation type="journal article" date="2005" name="Science">
        <title>The genome of the kinetoplastid parasite, Leishmania major.</title>
        <authorList>
            <person name="Ivens A.C."/>
            <person name="Peacock C.S."/>
            <person name="Worthey E.A."/>
            <person name="Murphy L."/>
            <person name="Aggarwal G."/>
            <person name="Berriman M."/>
            <person name="Sisk E."/>
            <person name="Rajandream M.A."/>
            <person name="Adlem E."/>
            <person name="Aert R."/>
            <person name="Anupama A."/>
            <person name="Apostolou Z."/>
            <person name="Attipoe P."/>
            <person name="Bason N."/>
            <person name="Bauser C."/>
            <person name="Beck A."/>
            <person name="Beverley S.M."/>
            <person name="Bianchettin G."/>
            <person name="Borzym K."/>
            <person name="Bothe G."/>
            <person name="Bruschi C.V."/>
            <person name="Collins M."/>
            <person name="Cadag E."/>
            <person name="Ciarloni L."/>
            <person name="Clayton C."/>
            <person name="Coulson R.M.R."/>
            <person name="Cronin A."/>
            <person name="Cruz A.K."/>
            <person name="Davies R.M."/>
            <person name="De Gaudenzi J."/>
            <person name="Dobson D.E."/>
            <person name="Duesterhoeft A."/>
            <person name="Fazelina G."/>
            <person name="Fosker N."/>
            <person name="Frasch A.C."/>
            <person name="Fraser A."/>
            <person name="Fuchs M."/>
            <person name="Gabel C."/>
            <person name="Goble A."/>
            <person name="Goffeau A."/>
            <person name="Harris D."/>
            <person name="Hertz-Fowler C."/>
            <person name="Hilbert H."/>
            <person name="Horn D."/>
            <person name="Huang Y."/>
            <person name="Klages S."/>
            <person name="Knights A."/>
            <person name="Kube M."/>
            <person name="Larke N."/>
            <person name="Litvin L."/>
            <person name="Lord A."/>
            <person name="Louie T."/>
            <person name="Marra M."/>
            <person name="Masuy D."/>
            <person name="Matthews K."/>
            <person name="Michaeli S."/>
            <person name="Mottram J.C."/>
            <person name="Mueller-Auer S."/>
            <person name="Munden H."/>
            <person name="Nelson S."/>
            <person name="Norbertczak H."/>
            <person name="Oliver K."/>
            <person name="O'neil S."/>
            <person name="Pentony M."/>
            <person name="Pohl T.M."/>
            <person name="Price C."/>
            <person name="Purnelle B."/>
            <person name="Quail M.A."/>
            <person name="Rabbinowitsch E."/>
            <person name="Reinhardt R."/>
            <person name="Rieger M."/>
            <person name="Rinta J."/>
            <person name="Robben J."/>
            <person name="Robertson L."/>
            <person name="Ruiz J.C."/>
            <person name="Rutter S."/>
            <person name="Saunders D."/>
            <person name="Schaefer M."/>
            <person name="Schein J."/>
            <person name="Schwartz D.C."/>
            <person name="Seeger K."/>
            <person name="Seyler A."/>
            <person name="Sharp S."/>
            <person name="Shin H."/>
            <person name="Sivam D."/>
            <person name="Squares R."/>
            <person name="Squares S."/>
            <person name="Tosato V."/>
            <person name="Vogt C."/>
            <person name="Volckaert G."/>
            <person name="Wambutt R."/>
            <person name="Warren T."/>
            <person name="Wedler H."/>
            <person name="Woodward J."/>
            <person name="Zhou S."/>
            <person name="Zimmermann W."/>
            <person name="Smith D.F."/>
            <person name="Blackwell J.M."/>
            <person name="Stuart K.D."/>
            <person name="Barrell B.G."/>
            <person name="Myler P.J."/>
        </authorList>
    </citation>
    <scope>NUCLEOTIDE SEQUENCE [LARGE SCALE GENOMIC DNA]</scope>
    <source>
        <strain>MHOM/IL/81/Friedlin</strain>
    </source>
</reference>
<accession>Q4QFD4</accession>
<gene>
    <name type="ORF">LmjF15.0510</name>
    <name type="ORF">LmjF_15_0510</name>
</gene>
<evidence type="ECO:0000305" key="1"/>
<keyword id="KW-1185">Reference proteome</keyword>
<organism>
    <name type="scientific">Leishmania major</name>
    <dbReference type="NCBI Taxonomy" id="5664"/>
    <lineage>
        <taxon>Eukaryota</taxon>
        <taxon>Discoba</taxon>
        <taxon>Euglenozoa</taxon>
        <taxon>Kinetoplastea</taxon>
        <taxon>Metakinetoplastina</taxon>
        <taxon>Trypanosomatida</taxon>
        <taxon>Trypanosomatidae</taxon>
        <taxon>Leishmaniinae</taxon>
        <taxon>Leishmania</taxon>
    </lineage>
</organism>
<name>ECOT2_LEIMA</name>
<dbReference type="EMBL" id="FR796411">
    <property type="protein sequence ID" value="CAJ03275.1"/>
    <property type="molecule type" value="Genomic_DNA"/>
</dbReference>
<dbReference type="RefSeq" id="XP_001681964.1">
    <property type="nucleotide sequence ID" value="XM_001681912.1"/>
</dbReference>
<dbReference type="SMR" id="Q4QFD4"/>
<dbReference type="MEROPS" id="I11.003"/>
<dbReference type="EnsemblProtists" id="CAJ03275">
    <property type="protein sequence ID" value="CAJ03275"/>
    <property type="gene ID" value="LMJF_15_0510"/>
</dbReference>
<dbReference type="GeneID" id="5650427"/>
<dbReference type="KEGG" id="lma:LMJF_15_0510"/>
<dbReference type="VEuPathDB" id="TriTrypDB:LmjF.15.0510"/>
<dbReference type="VEuPathDB" id="TriTrypDB:LMJFC_150011000"/>
<dbReference type="VEuPathDB" id="TriTrypDB:LMJLV39_150010900"/>
<dbReference type="VEuPathDB" id="TriTrypDB:LMJSD75_150010900"/>
<dbReference type="eggNOG" id="ENOG502S3WU">
    <property type="taxonomic scope" value="Eukaryota"/>
</dbReference>
<dbReference type="InParanoid" id="Q4QFD4"/>
<dbReference type="OMA" id="PKAEKGM"/>
<dbReference type="Proteomes" id="UP000000542">
    <property type="component" value="Chromosome 15"/>
</dbReference>
<dbReference type="GO" id="GO:0004867">
    <property type="term" value="F:serine-type endopeptidase inhibitor activity"/>
    <property type="evidence" value="ECO:0007669"/>
    <property type="project" value="InterPro"/>
</dbReference>
<dbReference type="GO" id="GO:0042784">
    <property type="term" value="P:symbiont-mediated suppression of host complement activation"/>
    <property type="evidence" value="ECO:0000315"/>
    <property type="project" value="GeneDB"/>
</dbReference>
<dbReference type="CDD" id="cd00242">
    <property type="entry name" value="Ecotin"/>
    <property type="match status" value="1"/>
</dbReference>
<dbReference type="FunFam" id="2.60.40.550:FF:000004">
    <property type="entry name" value="Ecotin-like protein 2"/>
    <property type="match status" value="1"/>
</dbReference>
<dbReference type="Gene3D" id="2.60.40.550">
    <property type="entry name" value="Ecotin"/>
    <property type="match status" value="1"/>
</dbReference>
<dbReference type="InterPro" id="IPR036198">
    <property type="entry name" value="Ecotin_sf"/>
</dbReference>
<dbReference type="InterPro" id="IPR005658">
    <property type="entry name" value="Prot_inh_ecotin"/>
</dbReference>
<dbReference type="InterPro" id="IPR023084">
    <property type="entry name" value="Prot_inh_ecotin_gammaproteobac"/>
</dbReference>
<dbReference type="PANTHER" id="PTHR35890">
    <property type="match status" value="1"/>
</dbReference>
<dbReference type="PANTHER" id="PTHR35890:SF3">
    <property type="entry name" value="ECOTIN"/>
    <property type="match status" value="1"/>
</dbReference>
<dbReference type="Pfam" id="PF03974">
    <property type="entry name" value="Ecotin"/>
    <property type="match status" value="1"/>
</dbReference>
<dbReference type="SUPFAM" id="SSF49772">
    <property type="entry name" value="Ecotin, trypsin inhibitor"/>
    <property type="match status" value="1"/>
</dbReference>
<comment type="similarity">
    <text evidence="1">Belongs to the protease inhibitor I11 (ecotin) family.</text>
</comment>
<sequence>MPAGMSDAAGKTLADFKAPYPEPTSQQRRYVIFLDPKGDSKELNDYKVELIPGRVEKVDGTNVYRMGGNIEERTIDGWGYPYYIVTLTTMSGTLMMPLGDAALKRPRFVAMNTKNLYRYNSRLPIVVYMPKDGELRYRIWTVKSTGSGTAKSTKAREM</sequence>
<protein>
    <recommendedName>
        <fullName>Ecotin-like protein 2</fullName>
    </recommendedName>
</protein>
<proteinExistence type="inferred from homology"/>
<feature type="chain" id="PRO_0000291595" description="Ecotin-like protein 2">
    <location>
        <begin position="1"/>
        <end position="158"/>
    </location>
</feature>